<sequence>MKLEEIKKFVAELRGLSQEELAKKENELKKELFDLRFQAAAGQLDQTARLNEVKKQIARIKTVQSEIK</sequence>
<organism>
    <name type="scientific">Streptococcus thermophilus (strain ATCC BAA-250 / LMG 18311)</name>
    <dbReference type="NCBI Taxonomy" id="264199"/>
    <lineage>
        <taxon>Bacteria</taxon>
        <taxon>Bacillati</taxon>
        <taxon>Bacillota</taxon>
        <taxon>Bacilli</taxon>
        <taxon>Lactobacillales</taxon>
        <taxon>Streptococcaceae</taxon>
        <taxon>Streptococcus</taxon>
    </lineage>
</organism>
<accession>Q5M2C1</accession>
<dbReference type="EMBL" id="CP000023">
    <property type="protein sequence ID" value="AAV61524.1"/>
    <property type="molecule type" value="Genomic_DNA"/>
</dbReference>
<dbReference type="RefSeq" id="WP_002952156.1">
    <property type="nucleotide sequence ID" value="NC_006448.1"/>
</dbReference>
<dbReference type="SMR" id="Q5M2C1"/>
<dbReference type="STRING" id="264199.stu1926"/>
<dbReference type="GeneID" id="66899654"/>
<dbReference type="KEGG" id="stl:stu1926"/>
<dbReference type="eggNOG" id="COG0255">
    <property type="taxonomic scope" value="Bacteria"/>
</dbReference>
<dbReference type="HOGENOM" id="CLU_158491_5_2_9"/>
<dbReference type="Proteomes" id="UP000001170">
    <property type="component" value="Chromosome"/>
</dbReference>
<dbReference type="GO" id="GO:0022625">
    <property type="term" value="C:cytosolic large ribosomal subunit"/>
    <property type="evidence" value="ECO:0007669"/>
    <property type="project" value="TreeGrafter"/>
</dbReference>
<dbReference type="GO" id="GO:0003735">
    <property type="term" value="F:structural constituent of ribosome"/>
    <property type="evidence" value="ECO:0007669"/>
    <property type="project" value="InterPro"/>
</dbReference>
<dbReference type="GO" id="GO:0006412">
    <property type="term" value="P:translation"/>
    <property type="evidence" value="ECO:0007669"/>
    <property type="project" value="UniProtKB-UniRule"/>
</dbReference>
<dbReference type="CDD" id="cd00427">
    <property type="entry name" value="Ribosomal_L29_HIP"/>
    <property type="match status" value="1"/>
</dbReference>
<dbReference type="FunFam" id="1.10.287.310:FF:000001">
    <property type="entry name" value="50S ribosomal protein L29"/>
    <property type="match status" value="1"/>
</dbReference>
<dbReference type="Gene3D" id="1.10.287.310">
    <property type="match status" value="1"/>
</dbReference>
<dbReference type="HAMAP" id="MF_00374">
    <property type="entry name" value="Ribosomal_uL29"/>
    <property type="match status" value="1"/>
</dbReference>
<dbReference type="InterPro" id="IPR050063">
    <property type="entry name" value="Ribosomal_protein_uL29"/>
</dbReference>
<dbReference type="InterPro" id="IPR001854">
    <property type="entry name" value="Ribosomal_uL29"/>
</dbReference>
<dbReference type="InterPro" id="IPR018254">
    <property type="entry name" value="Ribosomal_uL29_CS"/>
</dbReference>
<dbReference type="InterPro" id="IPR036049">
    <property type="entry name" value="Ribosomal_uL29_sf"/>
</dbReference>
<dbReference type="NCBIfam" id="TIGR00012">
    <property type="entry name" value="L29"/>
    <property type="match status" value="1"/>
</dbReference>
<dbReference type="PANTHER" id="PTHR10916">
    <property type="entry name" value="60S RIBOSOMAL PROTEIN L35/50S RIBOSOMAL PROTEIN L29"/>
    <property type="match status" value="1"/>
</dbReference>
<dbReference type="PANTHER" id="PTHR10916:SF0">
    <property type="entry name" value="LARGE RIBOSOMAL SUBUNIT PROTEIN UL29C"/>
    <property type="match status" value="1"/>
</dbReference>
<dbReference type="Pfam" id="PF00831">
    <property type="entry name" value="Ribosomal_L29"/>
    <property type="match status" value="1"/>
</dbReference>
<dbReference type="SUPFAM" id="SSF46561">
    <property type="entry name" value="Ribosomal protein L29 (L29p)"/>
    <property type="match status" value="1"/>
</dbReference>
<dbReference type="PROSITE" id="PS00579">
    <property type="entry name" value="RIBOSOMAL_L29"/>
    <property type="match status" value="1"/>
</dbReference>
<comment type="similarity">
    <text evidence="1">Belongs to the universal ribosomal protein uL29 family.</text>
</comment>
<gene>
    <name evidence="1" type="primary">rpmC</name>
    <name type="ordered locus">stu1926</name>
</gene>
<keyword id="KW-1185">Reference proteome</keyword>
<keyword id="KW-0687">Ribonucleoprotein</keyword>
<keyword id="KW-0689">Ribosomal protein</keyword>
<evidence type="ECO:0000255" key="1">
    <source>
        <dbReference type="HAMAP-Rule" id="MF_00374"/>
    </source>
</evidence>
<evidence type="ECO:0000305" key="2"/>
<feature type="chain" id="PRO_0000130475" description="Large ribosomal subunit protein uL29">
    <location>
        <begin position="1"/>
        <end position="68"/>
    </location>
</feature>
<name>RL29_STRT2</name>
<proteinExistence type="inferred from homology"/>
<protein>
    <recommendedName>
        <fullName evidence="1">Large ribosomal subunit protein uL29</fullName>
    </recommendedName>
    <alternativeName>
        <fullName evidence="2">50S ribosomal protein L29</fullName>
    </alternativeName>
</protein>
<reference key="1">
    <citation type="journal article" date="2004" name="Nat. Biotechnol.">
        <title>Complete sequence and comparative genome analysis of the dairy bacterium Streptococcus thermophilus.</title>
        <authorList>
            <person name="Bolotin A."/>
            <person name="Quinquis B."/>
            <person name="Renault P."/>
            <person name="Sorokin A."/>
            <person name="Ehrlich S.D."/>
            <person name="Kulakauskas S."/>
            <person name="Lapidus A."/>
            <person name="Goltsman E."/>
            <person name="Mazur M."/>
            <person name="Pusch G.D."/>
            <person name="Fonstein M."/>
            <person name="Overbeek R."/>
            <person name="Kyprides N."/>
            <person name="Purnelle B."/>
            <person name="Prozzi D."/>
            <person name="Ngui K."/>
            <person name="Masuy D."/>
            <person name="Hancy F."/>
            <person name="Burteau S."/>
            <person name="Boutry M."/>
            <person name="Delcour J."/>
            <person name="Goffeau A."/>
            <person name="Hols P."/>
        </authorList>
    </citation>
    <scope>NUCLEOTIDE SEQUENCE [LARGE SCALE GENOMIC DNA]</scope>
    <source>
        <strain>ATCC BAA-250 / LMG 18311</strain>
    </source>
</reference>